<proteinExistence type="inferred from homology"/>
<protein>
    <recommendedName>
        <fullName>Cyclin-Y-like protein 2</fullName>
    </recommendedName>
</protein>
<dbReference type="EMBL" id="AL391099">
    <property type="status" value="NOT_ANNOTATED_CDS"/>
    <property type="molecule type" value="Genomic_DNA"/>
</dbReference>
<dbReference type="SMR" id="Q5T2Q4"/>
<dbReference type="FunCoup" id="Q5T2Q4">
    <property type="interactions" value="6"/>
</dbReference>
<dbReference type="iPTMnet" id="Q5T2Q4"/>
<dbReference type="PhosphoSitePlus" id="Q5T2Q4"/>
<dbReference type="BioMuta" id="HGNC:23495"/>
<dbReference type="DMDM" id="162416272"/>
<dbReference type="MassIVE" id="Q5T2Q4"/>
<dbReference type="PeptideAtlas" id="Q5T2Q4"/>
<dbReference type="ProteomicsDB" id="64352"/>
<dbReference type="AGR" id="HGNC:23495"/>
<dbReference type="GeneCards" id="CCNYL2"/>
<dbReference type="HGNC" id="HGNC:23495">
    <property type="gene designation" value="CCNYL2"/>
</dbReference>
<dbReference type="neXtProt" id="NX_Q5T2Q4"/>
<dbReference type="InParanoid" id="Q5T2Q4"/>
<dbReference type="PAN-GO" id="Q5T2Q4">
    <property type="GO annotations" value="5 GO annotations based on evolutionary models"/>
</dbReference>
<dbReference type="PhylomeDB" id="Q5T2Q4"/>
<dbReference type="TreeFam" id="TF314464"/>
<dbReference type="ChiTaRS" id="CCNYL2">
    <property type="organism name" value="human"/>
</dbReference>
<dbReference type="Pharos" id="Q5T2Q4">
    <property type="development level" value="Tdark"/>
</dbReference>
<dbReference type="PRO" id="PR:Q5T2Q4"/>
<dbReference type="Proteomes" id="UP000005640">
    <property type="component" value="Unplaced"/>
</dbReference>
<dbReference type="RNAct" id="Q5T2Q4">
    <property type="molecule type" value="protein"/>
</dbReference>
<dbReference type="GO" id="GO:0005886">
    <property type="term" value="C:plasma membrane"/>
    <property type="evidence" value="ECO:0000318"/>
    <property type="project" value="GO_Central"/>
</dbReference>
<dbReference type="GO" id="GO:0019901">
    <property type="term" value="F:protein kinase binding"/>
    <property type="evidence" value="ECO:0007669"/>
    <property type="project" value="InterPro"/>
</dbReference>
<dbReference type="GO" id="GO:0060828">
    <property type="term" value="P:regulation of canonical Wnt signaling pathway"/>
    <property type="evidence" value="ECO:0000318"/>
    <property type="project" value="GO_Central"/>
</dbReference>
<dbReference type="CDD" id="cd20540">
    <property type="entry name" value="CYCLIN_CCNY_like"/>
    <property type="match status" value="1"/>
</dbReference>
<dbReference type="FunFam" id="1.10.472.10:FF:000123">
    <property type="entry name" value="Cyclin-Y-like protein 2"/>
    <property type="match status" value="1"/>
</dbReference>
<dbReference type="Gene3D" id="1.10.472.10">
    <property type="entry name" value="Cyclin-like"/>
    <property type="match status" value="1"/>
</dbReference>
<dbReference type="InterPro" id="IPR013763">
    <property type="entry name" value="Cyclin-like_dom"/>
</dbReference>
<dbReference type="InterPro" id="IPR036915">
    <property type="entry name" value="Cyclin-like_sf"/>
</dbReference>
<dbReference type="InterPro" id="IPR013922">
    <property type="entry name" value="Cyclin_PHO80-like"/>
</dbReference>
<dbReference type="InterPro" id="IPR012399">
    <property type="entry name" value="Cyclin_Y"/>
</dbReference>
<dbReference type="PANTHER" id="PTHR14248">
    <property type="entry name" value="CYCLIN Y, ISOFORM A"/>
    <property type="match status" value="1"/>
</dbReference>
<dbReference type="Pfam" id="PF08613">
    <property type="entry name" value="Cyclin"/>
    <property type="match status" value="1"/>
</dbReference>
<dbReference type="PIRSF" id="PIRSF028934">
    <property type="entry name" value="Cyclin_CG14939"/>
    <property type="match status" value="1"/>
</dbReference>
<dbReference type="SMART" id="SM00385">
    <property type="entry name" value="CYCLIN"/>
    <property type="match status" value="1"/>
</dbReference>
<dbReference type="SUPFAM" id="SSF47954">
    <property type="entry name" value="Cyclin-like"/>
    <property type="match status" value="1"/>
</dbReference>
<reference key="1">
    <citation type="journal article" date="2004" name="Nature">
        <title>The DNA sequence and comparative analysis of human chromosome 10.</title>
        <authorList>
            <person name="Deloukas P."/>
            <person name="Earthrowl M.E."/>
            <person name="Grafham D.V."/>
            <person name="Rubenfield M."/>
            <person name="French L."/>
            <person name="Steward C.A."/>
            <person name="Sims S.K."/>
            <person name="Jones M.C."/>
            <person name="Searle S."/>
            <person name="Scott C."/>
            <person name="Howe K."/>
            <person name="Hunt S.E."/>
            <person name="Andrews T.D."/>
            <person name="Gilbert J.G.R."/>
            <person name="Swarbreck D."/>
            <person name="Ashurst J.L."/>
            <person name="Taylor A."/>
            <person name="Battles J."/>
            <person name="Bird C.P."/>
            <person name="Ainscough R."/>
            <person name="Almeida J.P."/>
            <person name="Ashwell R.I.S."/>
            <person name="Ambrose K.D."/>
            <person name="Babbage A.K."/>
            <person name="Bagguley C.L."/>
            <person name="Bailey J."/>
            <person name="Banerjee R."/>
            <person name="Bates K."/>
            <person name="Beasley H."/>
            <person name="Bray-Allen S."/>
            <person name="Brown A.J."/>
            <person name="Brown J.Y."/>
            <person name="Burford D.C."/>
            <person name="Burrill W."/>
            <person name="Burton J."/>
            <person name="Cahill P."/>
            <person name="Camire D."/>
            <person name="Carter N.P."/>
            <person name="Chapman J.C."/>
            <person name="Clark S.Y."/>
            <person name="Clarke G."/>
            <person name="Clee C.M."/>
            <person name="Clegg S."/>
            <person name="Corby N."/>
            <person name="Coulson A."/>
            <person name="Dhami P."/>
            <person name="Dutta I."/>
            <person name="Dunn M."/>
            <person name="Faulkner L."/>
            <person name="Frankish A."/>
            <person name="Frankland J.A."/>
            <person name="Garner P."/>
            <person name="Garnett J."/>
            <person name="Gribble S."/>
            <person name="Griffiths C."/>
            <person name="Grocock R."/>
            <person name="Gustafson E."/>
            <person name="Hammond S."/>
            <person name="Harley J.L."/>
            <person name="Hart E."/>
            <person name="Heath P.D."/>
            <person name="Ho T.P."/>
            <person name="Hopkins B."/>
            <person name="Horne J."/>
            <person name="Howden P.J."/>
            <person name="Huckle E."/>
            <person name="Hynds C."/>
            <person name="Johnson C."/>
            <person name="Johnson D."/>
            <person name="Kana A."/>
            <person name="Kay M."/>
            <person name="Kimberley A.M."/>
            <person name="Kershaw J.K."/>
            <person name="Kokkinaki M."/>
            <person name="Laird G.K."/>
            <person name="Lawlor S."/>
            <person name="Lee H.M."/>
            <person name="Leongamornlert D.A."/>
            <person name="Laird G."/>
            <person name="Lloyd C."/>
            <person name="Lloyd D.M."/>
            <person name="Loveland J."/>
            <person name="Lovell J."/>
            <person name="McLaren S."/>
            <person name="McLay K.E."/>
            <person name="McMurray A."/>
            <person name="Mashreghi-Mohammadi M."/>
            <person name="Matthews L."/>
            <person name="Milne S."/>
            <person name="Nickerson T."/>
            <person name="Nguyen M."/>
            <person name="Overton-Larty E."/>
            <person name="Palmer S.A."/>
            <person name="Pearce A.V."/>
            <person name="Peck A.I."/>
            <person name="Pelan S."/>
            <person name="Phillimore B."/>
            <person name="Porter K."/>
            <person name="Rice C.M."/>
            <person name="Rogosin A."/>
            <person name="Ross M.T."/>
            <person name="Sarafidou T."/>
            <person name="Sehra H.K."/>
            <person name="Shownkeen R."/>
            <person name="Skuce C.D."/>
            <person name="Smith M."/>
            <person name="Standring L."/>
            <person name="Sycamore N."/>
            <person name="Tester J."/>
            <person name="Thorpe A."/>
            <person name="Torcasso W."/>
            <person name="Tracey A."/>
            <person name="Tromans A."/>
            <person name="Tsolas J."/>
            <person name="Wall M."/>
            <person name="Walsh J."/>
            <person name="Wang H."/>
            <person name="Weinstock K."/>
            <person name="West A.P."/>
            <person name="Willey D.L."/>
            <person name="Whitehead S.L."/>
            <person name="Wilming L."/>
            <person name="Wray P.W."/>
            <person name="Young L."/>
            <person name="Chen Y."/>
            <person name="Lovering R.C."/>
            <person name="Moschonas N.K."/>
            <person name="Siebert R."/>
            <person name="Fechtel K."/>
            <person name="Bentley D."/>
            <person name="Durbin R.M."/>
            <person name="Hubbard T."/>
            <person name="Doucette-Stamm L."/>
            <person name="Beck S."/>
            <person name="Smith D.R."/>
            <person name="Rogers J."/>
        </authorList>
    </citation>
    <scope>NUCLEOTIDE SEQUENCE [LARGE SCALE GENOMIC DNA]</scope>
</reference>
<keyword id="KW-0195">Cyclin</keyword>
<keyword id="KW-1185">Reference proteome</keyword>
<evidence type="ECO:0000305" key="1"/>
<sequence>MGNILTCCVCPRASPGLHQHQGLVCHCESEIYEAAAGDLIAGVPVAAAVEPGEVTFVAGEGLHMHHICEREMPEDIPLEPNPSDHPKASTIFLRKSQTDVQEKKKKQLCKVSTEHFTQQYSSCSTIFLDDSIASQPHLTMTLKSCDLGTILSYQAKRDAHRSLGIFDEQLHPLTVRKEVLEEYFKYDPEHKLIFRFVRTLFKAMRLTAEFAIVSLIYIERLVSYADIDICPTNWKRIVLGAILLASKVWSDMAVWNEDYCKLFKNITVEEMNELERQFLKLINYNNSITNSVYSRFYFDLRTLAHNNGLYSPVYLLDRERAWKLEAFSRMEQDKVFYSAAKNGSLSADDLIHLQRAKAILF</sequence>
<name>CCYL2_HUMAN</name>
<gene>
    <name type="primary">CCNYL2</name>
    <name type="synonym">C10orf21</name>
</gene>
<organism>
    <name type="scientific">Homo sapiens</name>
    <name type="common">Human</name>
    <dbReference type="NCBI Taxonomy" id="9606"/>
    <lineage>
        <taxon>Eukaryota</taxon>
        <taxon>Metazoa</taxon>
        <taxon>Chordata</taxon>
        <taxon>Craniata</taxon>
        <taxon>Vertebrata</taxon>
        <taxon>Euteleostomi</taxon>
        <taxon>Mammalia</taxon>
        <taxon>Eutheria</taxon>
        <taxon>Euarchontoglires</taxon>
        <taxon>Primates</taxon>
        <taxon>Haplorrhini</taxon>
        <taxon>Catarrhini</taxon>
        <taxon>Hominidae</taxon>
        <taxon>Homo</taxon>
    </lineage>
</organism>
<feature type="chain" id="PRO_0000311816" description="Cyclin-Y-like protein 2">
    <location>
        <begin position="1"/>
        <end position="361"/>
    </location>
</feature>
<feature type="domain" description="Cyclin N-terminal">
    <location>
        <begin position="204"/>
        <end position="286"/>
    </location>
</feature>
<feature type="sequence variant" id="VAR_037297" description="In dbSNP:rs2490085.">
    <original>V</original>
    <variation>E</variation>
    <location>
        <position position="57"/>
    </location>
</feature>
<feature type="sequence variant" id="VAR_037298" description="In dbSNP:rs2489720.">
    <original>R</original>
    <variation>Q</variation>
    <location>
        <position position="176"/>
    </location>
</feature>
<feature type="sequence variant" id="VAR_037299" description="In dbSNP:rs2505861.">
    <original>I</original>
    <variation>V</variation>
    <location>
        <position position="288"/>
    </location>
</feature>
<comment type="similarity">
    <text evidence="1">Belongs to the cyclin family. Cyclin Y subfamily.</text>
</comment>
<accession>Q5T2Q4</accession>